<proteinExistence type="inferred from homology"/>
<accession>Q4UMS6</accession>
<sequence length="273" mass="30242">MALKNFNPITPSLRELVQVDKTSLWKGRPLKSLTKGISKTGGRNNQGRITSWHRGGGHKKLYRIIDFKRNKIDISAIVERIEYDPNRTAFIALIKYEDGEYSYILAPQKLSVGDRVISSQDADIKIGNCLPLKFIPTGTTLHNVEMKVGKGGQIARSAGTSVDLVGKDSGYAQIKLRSGEFRLVPLDCKATIGSISNPDQKNINLGKAGRNRWLGWRPHVRGVAMNPVDHPHGGGEGKTSGGRHPVTPWGFPTKGKKTRKNKRTSKFIVKKRK</sequence>
<keyword id="KW-0687">Ribonucleoprotein</keyword>
<keyword id="KW-0689">Ribosomal protein</keyword>
<keyword id="KW-0694">RNA-binding</keyword>
<keyword id="KW-0699">rRNA-binding</keyword>
<comment type="function">
    <text evidence="1">One of the primary rRNA binding proteins. Required for association of the 30S and 50S subunits to form the 70S ribosome, for tRNA binding and peptide bond formation. It has been suggested to have peptidyltransferase activity; this is somewhat controversial. Makes several contacts with the 16S rRNA in the 70S ribosome.</text>
</comment>
<comment type="subunit">
    <text evidence="1">Part of the 50S ribosomal subunit. Forms a bridge to the 30S subunit in the 70S ribosome.</text>
</comment>
<comment type="similarity">
    <text evidence="1">Belongs to the universal ribosomal protein uL2 family.</text>
</comment>
<name>RL2_RICFE</name>
<organism>
    <name type="scientific">Rickettsia felis (strain ATCC VR-1525 / URRWXCal2)</name>
    <name type="common">Rickettsia azadi</name>
    <dbReference type="NCBI Taxonomy" id="315456"/>
    <lineage>
        <taxon>Bacteria</taxon>
        <taxon>Pseudomonadati</taxon>
        <taxon>Pseudomonadota</taxon>
        <taxon>Alphaproteobacteria</taxon>
        <taxon>Rickettsiales</taxon>
        <taxon>Rickettsiaceae</taxon>
        <taxon>Rickettsieae</taxon>
        <taxon>Rickettsia</taxon>
        <taxon>spotted fever group</taxon>
    </lineage>
</organism>
<feature type="chain" id="PRO_0000237235" description="Large ribosomal subunit protein uL2">
    <location>
        <begin position="1"/>
        <end position="273"/>
    </location>
</feature>
<feature type="region of interest" description="Disordered" evidence="2">
    <location>
        <begin position="228"/>
        <end position="273"/>
    </location>
</feature>
<feature type="compositionally biased region" description="Basic residues" evidence="2">
    <location>
        <begin position="254"/>
        <end position="273"/>
    </location>
</feature>
<dbReference type="EMBL" id="CP000053">
    <property type="protein sequence ID" value="AAY61132.1"/>
    <property type="molecule type" value="Genomic_DNA"/>
</dbReference>
<dbReference type="SMR" id="Q4UMS6"/>
<dbReference type="STRING" id="315456.RF_0281"/>
<dbReference type="KEGG" id="rfe:RF_0281"/>
<dbReference type="eggNOG" id="COG0090">
    <property type="taxonomic scope" value="Bacteria"/>
</dbReference>
<dbReference type="HOGENOM" id="CLU_036235_2_1_5"/>
<dbReference type="OrthoDB" id="9778722at2"/>
<dbReference type="Proteomes" id="UP000008548">
    <property type="component" value="Chromosome"/>
</dbReference>
<dbReference type="GO" id="GO:0015934">
    <property type="term" value="C:large ribosomal subunit"/>
    <property type="evidence" value="ECO:0007669"/>
    <property type="project" value="InterPro"/>
</dbReference>
<dbReference type="GO" id="GO:0019843">
    <property type="term" value="F:rRNA binding"/>
    <property type="evidence" value="ECO:0007669"/>
    <property type="project" value="UniProtKB-UniRule"/>
</dbReference>
<dbReference type="GO" id="GO:0003735">
    <property type="term" value="F:structural constituent of ribosome"/>
    <property type="evidence" value="ECO:0007669"/>
    <property type="project" value="InterPro"/>
</dbReference>
<dbReference type="GO" id="GO:0016740">
    <property type="term" value="F:transferase activity"/>
    <property type="evidence" value="ECO:0007669"/>
    <property type="project" value="InterPro"/>
</dbReference>
<dbReference type="GO" id="GO:0006412">
    <property type="term" value="P:translation"/>
    <property type="evidence" value="ECO:0007669"/>
    <property type="project" value="UniProtKB-UniRule"/>
</dbReference>
<dbReference type="FunFam" id="2.30.30.30:FF:000001">
    <property type="entry name" value="50S ribosomal protein L2"/>
    <property type="match status" value="1"/>
</dbReference>
<dbReference type="FunFam" id="2.40.50.140:FF:000003">
    <property type="entry name" value="50S ribosomal protein L2"/>
    <property type="match status" value="1"/>
</dbReference>
<dbReference type="FunFam" id="4.10.950.10:FF:000001">
    <property type="entry name" value="50S ribosomal protein L2"/>
    <property type="match status" value="1"/>
</dbReference>
<dbReference type="Gene3D" id="2.30.30.30">
    <property type="match status" value="1"/>
</dbReference>
<dbReference type="Gene3D" id="2.40.50.140">
    <property type="entry name" value="Nucleic acid-binding proteins"/>
    <property type="match status" value="1"/>
</dbReference>
<dbReference type="Gene3D" id="4.10.950.10">
    <property type="entry name" value="Ribosomal protein L2, domain 3"/>
    <property type="match status" value="1"/>
</dbReference>
<dbReference type="HAMAP" id="MF_01320_B">
    <property type="entry name" value="Ribosomal_uL2_B"/>
    <property type="match status" value="1"/>
</dbReference>
<dbReference type="InterPro" id="IPR012340">
    <property type="entry name" value="NA-bd_OB-fold"/>
</dbReference>
<dbReference type="InterPro" id="IPR014722">
    <property type="entry name" value="Rib_uL2_dom2"/>
</dbReference>
<dbReference type="InterPro" id="IPR002171">
    <property type="entry name" value="Ribosomal_uL2"/>
</dbReference>
<dbReference type="InterPro" id="IPR005880">
    <property type="entry name" value="Ribosomal_uL2_bac/org-type"/>
</dbReference>
<dbReference type="InterPro" id="IPR022669">
    <property type="entry name" value="Ribosomal_uL2_C"/>
</dbReference>
<dbReference type="InterPro" id="IPR022671">
    <property type="entry name" value="Ribosomal_uL2_CS"/>
</dbReference>
<dbReference type="InterPro" id="IPR014726">
    <property type="entry name" value="Ribosomal_uL2_dom3"/>
</dbReference>
<dbReference type="InterPro" id="IPR022666">
    <property type="entry name" value="Ribosomal_uL2_RNA-bd_dom"/>
</dbReference>
<dbReference type="InterPro" id="IPR008991">
    <property type="entry name" value="Translation_prot_SH3-like_sf"/>
</dbReference>
<dbReference type="NCBIfam" id="TIGR01171">
    <property type="entry name" value="rplB_bact"/>
    <property type="match status" value="1"/>
</dbReference>
<dbReference type="PANTHER" id="PTHR13691:SF5">
    <property type="entry name" value="LARGE RIBOSOMAL SUBUNIT PROTEIN UL2M"/>
    <property type="match status" value="1"/>
</dbReference>
<dbReference type="PANTHER" id="PTHR13691">
    <property type="entry name" value="RIBOSOMAL PROTEIN L2"/>
    <property type="match status" value="1"/>
</dbReference>
<dbReference type="Pfam" id="PF00181">
    <property type="entry name" value="Ribosomal_L2"/>
    <property type="match status" value="1"/>
</dbReference>
<dbReference type="Pfam" id="PF03947">
    <property type="entry name" value="Ribosomal_L2_C"/>
    <property type="match status" value="1"/>
</dbReference>
<dbReference type="PIRSF" id="PIRSF002158">
    <property type="entry name" value="Ribosomal_L2"/>
    <property type="match status" value="1"/>
</dbReference>
<dbReference type="SMART" id="SM01383">
    <property type="entry name" value="Ribosomal_L2"/>
    <property type="match status" value="1"/>
</dbReference>
<dbReference type="SMART" id="SM01382">
    <property type="entry name" value="Ribosomal_L2_C"/>
    <property type="match status" value="1"/>
</dbReference>
<dbReference type="SUPFAM" id="SSF50249">
    <property type="entry name" value="Nucleic acid-binding proteins"/>
    <property type="match status" value="1"/>
</dbReference>
<dbReference type="SUPFAM" id="SSF50104">
    <property type="entry name" value="Translation proteins SH3-like domain"/>
    <property type="match status" value="1"/>
</dbReference>
<dbReference type="PROSITE" id="PS00467">
    <property type="entry name" value="RIBOSOMAL_L2"/>
    <property type="match status" value="1"/>
</dbReference>
<evidence type="ECO:0000255" key="1">
    <source>
        <dbReference type="HAMAP-Rule" id="MF_01320"/>
    </source>
</evidence>
<evidence type="ECO:0000256" key="2">
    <source>
        <dbReference type="SAM" id="MobiDB-lite"/>
    </source>
</evidence>
<evidence type="ECO:0000305" key="3"/>
<protein>
    <recommendedName>
        <fullName evidence="1">Large ribosomal subunit protein uL2</fullName>
    </recommendedName>
    <alternativeName>
        <fullName evidence="3">50S ribosomal protein L2</fullName>
    </alternativeName>
</protein>
<reference key="1">
    <citation type="journal article" date="2005" name="PLoS Biol.">
        <title>The genome sequence of Rickettsia felis identifies the first putative conjugative plasmid in an obligate intracellular parasite.</title>
        <authorList>
            <person name="Ogata H."/>
            <person name="Renesto P."/>
            <person name="Audic S."/>
            <person name="Robert C."/>
            <person name="Blanc G."/>
            <person name="Fournier P.-E."/>
            <person name="Parinello H."/>
            <person name="Claverie J.-M."/>
            <person name="Raoult D."/>
        </authorList>
    </citation>
    <scope>NUCLEOTIDE SEQUENCE [LARGE SCALE GENOMIC DNA]</scope>
    <source>
        <strain>ATCC VR-1525 / URRWXCal2</strain>
    </source>
</reference>
<gene>
    <name evidence="1" type="primary">rplB</name>
    <name type="ordered locus">RF_0281</name>
</gene>